<comment type="catalytic activity">
    <reaction evidence="1">
        <text>CMP + ATP = CDP + ADP</text>
        <dbReference type="Rhea" id="RHEA:11600"/>
        <dbReference type="ChEBI" id="CHEBI:30616"/>
        <dbReference type="ChEBI" id="CHEBI:58069"/>
        <dbReference type="ChEBI" id="CHEBI:60377"/>
        <dbReference type="ChEBI" id="CHEBI:456216"/>
        <dbReference type="EC" id="2.7.4.25"/>
    </reaction>
</comment>
<comment type="catalytic activity">
    <reaction evidence="1">
        <text>dCMP + ATP = dCDP + ADP</text>
        <dbReference type="Rhea" id="RHEA:25094"/>
        <dbReference type="ChEBI" id="CHEBI:30616"/>
        <dbReference type="ChEBI" id="CHEBI:57566"/>
        <dbReference type="ChEBI" id="CHEBI:58593"/>
        <dbReference type="ChEBI" id="CHEBI:456216"/>
        <dbReference type="EC" id="2.7.4.25"/>
    </reaction>
</comment>
<comment type="subcellular location">
    <subcellularLocation>
        <location evidence="1">Cytoplasm</location>
    </subcellularLocation>
</comment>
<comment type="similarity">
    <text evidence="1">Belongs to the cytidylate kinase family. Type 1 subfamily.</text>
</comment>
<reference key="1">
    <citation type="submission" date="2004-12" db="EMBL/GenBank/DDBJ databases">
        <title>The genome sequence of Borrelia hermsii and Borrelia turicatae: comparative analysis of two agents of endemic N. America relapsing fever.</title>
        <authorList>
            <person name="Porcella S.F."/>
            <person name="Raffel S.J."/>
            <person name="Schrumpf M.E."/>
            <person name="Montgomery B."/>
            <person name="Smith T."/>
            <person name="Schwan T.G."/>
        </authorList>
    </citation>
    <scope>NUCLEOTIDE SEQUENCE [LARGE SCALE GENOMIC DNA]</scope>
    <source>
        <strain>91E135</strain>
    </source>
</reference>
<feature type="chain" id="PRO_1000125274" description="Cytidylate kinase">
    <location>
        <begin position="1"/>
        <end position="222"/>
    </location>
</feature>
<feature type="binding site" evidence="1">
    <location>
        <begin position="7"/>
        <end position="15"/>
    </location>
    <ligand>
        <name>ATP</name>
        <dbReference type="ChEBI" id="CHEBI:30616"/>
    </ligand>
</feature>
<name>KCY_BORT9</name>
<evidence type="ECO:0000255" key="1">
    <source>
        <dbReference type="HAMAP-Rule" id="MF_00238"/>
    </source>
</evidence>
<accession>A1QYS8</accession>
<keyword id="KW-0067">ATP-binding</keyword>
<keyword id="KW-0963">Cytoplasm</keyword>
<keyword id="KW-0418">Kinase</keyword>
<keyword id="KW-0547">Nucleotide-binding</keyword>
<keyword id="KW-1185">Reference proteome</keyword>
<keyword id="KW-0808">Transferase</keyword>
<organism>
    <name type="scientific">Borrelia turicatae (strain 91E135)</name>
    <dbReference type="NCBI Taxonomy" id="314724"/>
    <lineage>
        <taxon>Bacteria</taxon>
        <taxon>Pseudomonadati</taxon>
        <taxon>Spirochaetota</taxon>
        <taxon>Spirochaetia</taxon>
        <taxon>Spirochaetales</taxon>
        <taxon>Borreliaceae</taxon>
        <taxon>Borrelia</taxon>
    </lineage>
</organism>
<gene>
    <name evidence="1" type="primary">cmk</name>
    <name type="ordered locus">BT0128</name>
</gene>
<protein>
    <recommendedName>
        <fullName evidence="1">Cytidylate kinase</fullName>
        <shortName evidence="1">CK</shortName>
        <ecNumber evidence="1">2.7.4.25</ecNumber>
    </recommendedName>
    <alternativeName>
        <fullName evidence="1">Cytidine monophosphate kinase</fullName>
        <shortName evidence="1">CMP kinase</shortName>
    </alternativeName>
</protein>
<sequence>MVIAIDGPSASGKSSIAKALGMRLGFKFISSGYFYRIITLIAQRFSLNEYDLLSESKILELVSQNDIKFNGFDFLLNGTNVISHILNERIDFQVSLYSSYIGVRNIVNKKLREIVKLKDDNYIIEGRDITTVVFPEAEVKIYLDASVKVRALRRYNQRSDNVTLNELEQALERRDEIDQNKEYGKLKLDKEVFYIDTSYKCLDDVCNIIIKTFNLKKKVIER</sequence>
<dbReference type="EC" id="2.7.4.25" evidence="1"/>
<dbReference type="EMBL" id="CP000049">
    <property type="protein sequence ID" value="AAX17470.1"/>
    <property type="molecule type" value="Genomic_DNA"/>
</dbReference>
<dbReference type="RefSeq" id="WP_011772089.1">
    <property type="nucleotide sequence ID" value="NC_008710.1"/>
</dbReference>
<dbReference type="SMR" id="A1QYS8"/>
<dbReference type="KEGG" id="btu:BT0128"/>
<dbReference type="eggNOG" id="COG0283">
    <property type="taxonomic scope" value="Bacteria"/>
</dbReference>
<dbReference type="HOGENOM" id="CLU_079959_0_2_12"/>
<dbReference type="Proteomes" id="UP000001205">
    <property type="component" value="Chromosome"/>
</dbReference>
<dbReference type="GO" id="GO:0005737">
    <property type="term" value="C:cytoplasm"/>
    <property type="evidence" value="ECO:0007669"/>
    <property type="project" value="UniProtKB-SubCell"/>
</dbReference>
<dbReference type="GO" id="GO:0005524">
    <property type="term" value="F:ATP binding"/>
    <property type="evidence" value="ECO:0007669"/>
    <property type="project" value="UniProtKB-UniRule"/>
</dbReference>
<dbReference type="GO" id="GO:0036430">
    <property type="term" value="F:CMP kinase activity"/>
    <property type="evidence" value="ECO:0007669"/>
    <property type="project" value="RHEA"/>
</dbReference>
<dbReference type="GO" id="GO:0036431">
    <property type="term" value="F:dCMP kinase activity"/>
    <property type="evidence" value="ECO:0007669"/>
    <property type="project" value="RHEA"/>
</dbReference>
<dbReference type="GO" id="GO:0006220">
    <property type="term" value="P:pyrimidine nucleotide metabolic process"/>
    <property type="evidence" value="ECO:0007669"/>
    <property type="project" value="UniProtKB-UniRule"/>
</dbReference>
<dbReference type="CDD" id="cd02020">
    <property type="entry name" value="CMPK"/>
    <property type="match status" value="1"/>
</dbReference>
<dbReference type="Gene3D" id="3.40.50.300">
    <property type="entry name" value="P-loop containing nucleotide triphosphate hydrolases"/>
    <property type="match status" value="1"/>
</dbReference>
<dbReference type="HAMAP" id="MF_00238">
    <property type="entry name" value="Cytidyl_kinase_type1"/>
    <property type="match status" value="1"/>
</dbReference>
<dbReference type="InterPro" id="IPR003136">
    <property type="entry name" value="Cytidylate_kin"/>
</dbReference>
<dbReference type="InterPro" id="IPR011994">
    <property type="entry name" value="Cytidylate_kinase_dom"/>
</dbReference>
<dbReference type="InterPro" id="IPR027417">
    <property type="entry name" value="P-loop_NTPase"/>
</dbReference>
<dbReference type="NCBIfam" id="TIGR00017">
    <property type="entry name" value="cmk"/>
    <property type="match status" value="1"/>
</dbReference>
<dbReference type="Pfam" id="PF02224">
    <property type="entry name" value="Cytidylate_kin"/>
    <property type="match status" value="1"/>
</dbReference>
<dbReference type="SUPFAM" id="SSF52540">
    <property type="entry name" value="P-loop containing nucleoside triphosphate hydrolases"/>
    <property type="match status" value="1"/>
</dbReference>
<proteinExistence type="inferred from homology"/>